<name>RS181_MYCBO</name>
<accession>P69231</accession>
<accession>A0A1R3XU68</accession>
<accession>P71712</accession>
<accession>X2BDW2</accession>
<evidence type="ECO:0000255" key="1">
    <source>
        <dbReference type="HAMAP-Rule" id="MF_00270"/>
    </source>
</evidence>
<evidence type="ECO:0000305" key="2"/>
<reference key="1">
    <citation type="journal article" date="2003" name="Proc. Natl. Acad. Sci. U.S.A.">
        <title>The complete genome sequence of Mycobacterium bovis.</title>
        <authorList>
            <person name="Garnier T."/>
            <person name="Eiglmeier K."/>
            <person name="Camus J.-C."/>
            <person name="Medina N."/>
            <person name="Mansoor H."/>
            <person name="Pryor M."/>
            <person name="Duthoy S."/>
            <person name="Grondin S."/>
            <person name="Lacroix C."/>
            <person name="Monsempe C."/>
            <person name="Simon S."/>
            <person name="Harris B."/>
            <person name="Atkin R."/>
            <person name="Doggett J."/>
            <person name="Mayes R."/>
            <person name="Keating L."/>
            <person name="Wheeler P.R."/>
            <person name="Parkhill J."/>
            <person name="Barrell B.G."/>
            <person name="Cole S.T."/>
            <person name="Gordon S.V."/>
            <person name="Hewinson R.G."/>
        </authorList>
    </citation>
    <scope>NUCLEOTIDE SEQUENCE [LARGE SCALE GENOMIC DNA]</scope>
    <source>
        <strain>ATCC BAA-935 / AF2122/97</strain>
    </source>
</reference>
<reference key="2">
    <citation type="journal article" date="2017" name="Genome Announc.">
        <title>Updated reference genome sequence and annotation of Mycobacterium bovis AF2122/97.</title>
        <authorList>
            <person name="Malone K.M."/>
            <person name="Farrell D."/>
            <person name="Stuber T.P."/>
            <person name="Schubert O.T."/>
            <person name="Aebersold R."/>
            <person name="Robbe-Austerman S."/>
            <person name="Gordon S.V."/>
        </authorList>
    </citation>
    <scope>NUCLEOTIDE SEQUENCE [LARGE SCALE GENOMIC DNA]</scope>
    <scope>GENOME REANNOTATION</scope>
    <source>
        <strain>ATCC BAA-935 / AF2122/97</strain>
    </source>
</reference>
<dbReference type="EMBL" id="LT708304">
    <property type="protein sequence ID" value="SIT98425.1"/>
    <property type="molecule type" value="Genomic_DNA"/>
</dbReference>
<dbReference type="RefSeq" id="NP_853725.1">
    <property type="nucleotide sequence ID" value="NC_002945.3"/>
</dbReference>
<dbReference type="RefSeq" id="WP_003400540.1">
    <property type="nucleotide sequence ID" value="NC_002945.4"/>
</dbReference>
<dbReference type="SMR" id="P69231"/>
<dbReference type="GeneID" id="45424014"/>
<dbReference type="KEGG" id="mbo:BQ2027_MB0056"/>
<dbReference type="PATRIC" id="fig|233413.5.peg.62"/>
<dbReference type="Proteomes" id="UP000001419">
    <property type="component" value="Chromosome"/>
</dbReference>
<dbReference type="GO" id="GO:0022627">
    <property type="term" value="C:cytosolic small ribosomal subunit"/>
    <property type="evidence" value="ECO:0007669"/>
    <property type="project" value="TreeGrafter"/>
</dbReference>
<dbReference type="GO" id="GO:0070181">
    <property type="term" value="F:small ribosomal subunit rRNA binding"/>
    <property type="evidence" value="ECO:0007669"/>
    <property type="project" value="TreeGrafter"/>
</dbReference>
<dbReference type="GO" id="GO:0003735">
    <property type="term" value="F:structural constituent of ribosome"/>
    <property type="evidence" value="ECO:0007669"/>
    <property type="project" value="InterPro"/>
</dbReference>
<dbReference type="GO" id="GO:0006412">
    <property type="term" value="P:translation"/>
    <property type="evidence" value="ECO:0007669"/>
    <property type="project" value="UniProtKB-UniRule"/>
</dbReference>
<dbReference type="FunFam" id="4.10.640.10:FF:000004">
    <property type="entry name" value="30S ribosomal protein S18"/>
    <property type="match status" value="1"/>
</dbReference>
<dbReference type="Gene3D" id="4.10.640.10">
    <property type="entry name" value="Ribosomal protein S18"/>
    <property type="match status" value="1"/>
</dbReference>
<dbReference type="HAMAP" id="MF_00270">
    <property type="entry name" value="Ribosomal_bS18"/>
    <property type="match status" value="1"/>
</dbReference>
<dbReference type="InterPro" id="IPR001648">
    <property type="entry name" value="Ribosomal_bS18"/>
</dbReference>
<dbReference type="InterPro" id="IPR018275">
    <property type="entry name" value="Ribosomal_bS18_CS"/>
</dbReference>
<dbReference type="InterPro" id="IPR036870">
    <property type="entry name" value="Ribosomal_bS18_sf"/>
</dbReference>
<dbReference type="NCBIfam" id="TIGR00165">
    <property type="entry name" value="S18"/>
    <property type="match status" value="1"/>
</dbReference>
<dbReference type="PANTHER" id="PTHR13479">
    <property type="entry name" value="30S RIBOSOMAL PROTEIN S18"/>
    <property type="match status" value="1"/>
</dbReference>
<dbReference type="PANTHER" id="PTHR13479:SF62">
    <property type="entry name" value="SMALL RIBOSOMAL SUBUNIT PROTEIN BS18A"/>
    <property type="match status" value="1"/>
</dbReference>
<dbReference type="Pfam" id="PF01084">
    <property type="entry name" value="Ribosomal_S18"/>
    <property type="match status" value="1"/>
</dbReference>
<dbReference type="PRINTS" id="PR00974">
    <property type="entry name" value="RIBOSOMALS18"/>
</dbReference>
<dbReference type="SUPFAM" id="SSF46911">
    <property type="entry name" value="Ribosomal protein S18"/>
    <property type="match status" value="1"/>
</dbReference>
<dbReference type="PROSITE" id="PS00057">
    <property type="entry name" value="RIBOSOMAL_S18"/>
    <property type="match status" value="1"/>
</dbReference>
<proteinExistence type="inferred from homology"/>
<feature type="chain" id="PRO_0000111177" description="Small ribosomal subunit protein bS18A">
    <location>
        <begin position="1"/>
        <end position="84"/>
    </location>
</feature>
<organism>
    <name type="scientific">Mycobacterium bovis (strain ATCC BAA-935 / AF2122/97)</name>
    <dbReference type="NCBI Taxonomy" id="233413"/>
    <lineage>
        <taxon>Bacteria</taxon>
        <taxon>Bacillati</taxon>
        <taxon>Actinomycetota</taxon>
        <taxon>Actinomycetes</taxon>
        <taxon>Mycobacteriales</taxon>
        <taxon>Mycobacteriaceae</taxon>
        <taxon>Mycobacterium</taxon>
        <taxon>Mycobacterium tuberculosis complex</taxon>
    </lineage>
</organism>
<comment type="function">
    <text evidence="1">Binds as a heterodimer with protein bS6 to the central domain of the 16S rRNA, where it helps stabilize the platform of the 30S subunit.</text>
</comment>
<comment type="subunit">
    <text evidence="1">Part of the 30S ribosomal subunit. Forms a tight heterodimer with protein bS6.</text>
</comment>
<comment type="similarity">
    <text evidence="2">Belongs to the bacterial ribosomal protein bS18 family.</text>
</comment>
<gene>
    <name type="primary">rpsR1</name>
    <name type="synonym">rpsR</name>
    <name type="ordered locus">BQ2027_MB0056</name>
</gene>
<sequence>MAKSSKRRPAPEKPVKTRKCVFCAKKDQAIDYKDTALLRTYISERGKIRARRVTGNCVQHQRDIALAVKNAREVALLPFTSSVR</sequence>
<protein>
    <recommendedName>
        <fullName evidence="1">Small ribosomal subunit protein bS18A</fullName>
    </recommendedName>
    <alternativeName>
        <fullName evidence="2">30S ribosomal protein S18 1</fullName>
    </alternativeName>
</protein>
<keyword id="KW-1185">Reference proteome</keyword>
<keyword id="KW-0687">Ribonucleoprotein</keyword>
<keyword id="KW-0689">Ribosomal protein</keyword>
<keyword id="KW-0694">RNA-binding</keyword>
<keyword id="KW-0699">rRNA-binding</keyword>